<comment type="function">
    <text evidence="1">Encapsidates the viral genome into characteristic twinned ('geminate') particles. Binds the genomic viral ssDNA and shuttles it into and out of the cell nucleus. Plays a role in protection of the genome from degradation, virus acquisition and transmission by insect vectors, infectivity, and systemic movement. The CP of monopartite geminiviruses is absolutely essential for virus movement (By similarity).</text>
</comment>
<comment type="subunit">
    <text evidence="1">Homomultimer. Interacts with the movement protein. Binds to single-stranded and double-stranded viral DNA (By similarity).</text>
</comment>
<comment type="subcellular location">
    <subcellularLocation>
        <location evidence="1">Virion</location>
    </subcellularLocation>
    <subcellularLocation>
        <location>Host nucleus</location>
    </subcellularLocation>
    <text evidence="1">It is actively transported into the host cell nucleus. It may be exported out of the nucleus through a nuclear export signal for cell-to-cell movement and spread (By similarity).</text>
</comment>
<comment type="similarity">
    <text evidence="3">Belongs to the geminiviridae capsid protein family.</text>
</comment>
<reference key="1">
    <citation type="journal article" date="1988" name="Nucleic Acids Res.">
        <title>Infectivity and complete nucleotide sequence of the genome of a South African isolate of maize streak virus.</title>
        <authorList>
            <person name="Lazarowitz S.G."/>
        </authorList>
    </citation>
    <scope>NUCLEOTIDE SEQUENCE [GENOMIC DNA]</scope>
</reference>
<organismHost>
    <name type="scientific">Avena sativa</name>
    <name type="common">Oat</name>
    <dbReference type="NCBI Taxonomy" id="4498"/>
</organismHost>
<organismHost>
    <name type="scientific">Axonopus compressus</name>
    <dbReference type="NCBI Taxonomy" id="217170"/>
</organismHost>
<organismHost>
    <name type="scientific">Cenchrus americanus</name>
    <name type="common">Pearl millet</name>
    <name type="synonym">Pennisetum glaucum</name>
    <dbReference type="NCBI Taxonomy" id="4543"/>
</organismHost>
<organismHost>
    <name type="scientific">Cenchrus polystachios</name>
    <dbReference type="NCBI Taxonomy" id="281129"/>
</organismHost>
<organismHost>
    <name type="scientific">Coix lacryma-jobi</name>
    <name type="common">Job's tears</name>
    <dbReference type="NCBI Taxonomy" id="4505"/>
</organismHost>
<organismHost>
    <name type="scientific">Dactyloctenium aegyptium</name>
    <dbReference type="NCBI Taxonomy" id="270102"/>
</organismHost>
<organismHost>
    <name type="scientific">Digitaria</name>
    <dbReference type="NCBI Taxonomy" id="66017"/>
</organismHost>
<organismHost>
    <name type="scientific">Echinochloa colona</name>
    <dbReference type="NCBI Taxonomy" id="90396"/>
</organismHost>
<organismHost>
    <name type="scientific">Eleusine coracana</name>
    <name type="common">Indian finger millet</name>
    <name type="synonym">Ragi</name>
    <dbReference type="NCBI Taxonomy" id="4511"/>
</organismHost>
<organismHost>
    <name type="scientific">Eleusine indica</name>
    <name type="common">Goosegrass</name>
    <name type="synonym">Cynosurus indicus</name>
    <dbReference type="NCBI Taxonomy" id="29674"/>
</organismHost>
<organismHost>
    <name type="scientific">Hordeum vulgare</name>
    <name type="common">Barley</name>
    <dbReference type="NCBI Taxonomy" id="4513"/>
</organismHost>
<organismHost>
    <name type="scientific">Megathyrsus maximus</name>
    <dbReference type="NCBI Taxonomy" id="59788"/>
</organismHost>
<organismHost>
    <name type="scientific">Melinis repens</name>
    <name type="common">Red Natal grass</name>
    <name type="synonym">Rhynchelytrum repens</name>
    <dbReference type="NCBI Taxonomy" id="29709"/>
</organismHost>
<organismHost>
    <name type="scientific">Oryza glaberrima</name>
    <name type="common">African rice</name>
    <dbReference type="NCBI Taxonomy" id="4538"/>
</organismHost>
<organismHost>
    <name type="scientific">Oryza sativa</name>
    <name type="common">Rice</name>
    <dbReference type="NCBI Taxonomy" id="4530"/>
</organismHost>
<organismHost>
    <name type="scientific">Paspalum conjugatum</name>
    <name type="common">Hilo grass</name>
    <dbReference type="NCBI Taxonomy" id="158143"/>
</organismHost>
<organismHost>
    <name type="scientific">Paspalum notatum</name>
    <name type="common">Bahia grass</name>
    <dbReference type="NCBI Taxonomy" id="147272"/>
</organismHost>
<organismHost>
    <name type="scientific">Paspalum scrobiculatum</name>
    <dbReference type="NCBI Taxonomy" id="173849"/>
</organismHost>
<organismHost>
    <name type="scientific">Rottboellia cochinchinensis</name>
    <dbReference type="NCBI Taxonomy" id="300125"/>
</organismHost>
<organismHost>
    <name type="scientific">Saccharum officinarum</name>
    <name type="common">Sugarcane</name>
    <dbReference type="NCBI Taxonomy" id="4547"/>
</organismHost>
<organismHost>
    <name type="scientific">Setaria barbata</name>
    <dbReference type="NCBI Taxonomy" id="192628"/>
</organismHost>
<organismHost>
    <name type="scientific">Triticum aestivum</name>
    <name type="common">Wheat</name>
    <dbReference type="NCBI Taxonomy" id="4565"/>
</organismHost>
<organismHost>
    <name type="scientific">Urochloa deflexa</name>
    <dbReference type="NCBI Taxonomy" id="240436"/>
</organismHost>
<organismHost>
    <name type="scientific">Zea mays</name>
    <name type="common">Maize</name>
    <dbReference type="NCBI Taxonomy" id="4577"/>
</organismHost>
<evidence type="ECO:0000250" key="1"/>
<evidence type="ECO:0000256" key="2">
    <source>
        <dbReference type="SAM" id="MobiDB-lite"/>
    </source>
</evidence>
<evidence type="ECO:0000305" key="3"/>
<accession>P14986</accession>
<dbReference type="EMBL" id="Y00514">
    <property type="protein sequence ID" value="CAA68566.1"/>
    <property type="molecule type" value="Genomic_DNA"/>
</dbReference>
<dbReference type="PIR" id="S04805">
    <property type="entry name" value="S04805"/>
</dbReference>
<dbReference type="SMR" id="P14986"/>
<dbReference type="Proteomes" id="UP000006541">
    <property type="component" value="Segment"/>
</dbReference>
<dbReference type="GO" id="GO:0043657">
    <property type="term" value="C:host cell"/>
    <property type="evidence" value="ECO:0007669"/>
    <property type="project" value="GOC"/>
</dbReference>
<dbReference type="GO" id="GO:0042025">
    <property type="term" value="C:host cell nucleus"/>
    <property type="evidence" value="ECO:0007669"/>
    <property type="project" value="UniProtKB-SubCell"/>
</dbReference>
<dbReference type="GO" id="GO:0039615">
    <property type="term" value="C:T=1 icosahedral viral capsid"/>
    <property type="evidence" value="ECO:0007669"/>
    <property type="project" value="UniProtKB-KW"/>
</dbReference>
<dbReference type="GO" id="GO:0003677">
    <property type="term" value="F:DNA binding"/>
    <property type="evidence" value="ECO:0007669"/>
    <property type="project" value="UniProtKB-KW"/>
</dbReference>
<dbReference type="GO" id="GO:0005198">
    <property type="term" value="F:structural molecule activity"/>
    <property type="evidence" value="ECO:0007669"/>
    <property type="project" value="InterPro"/>
</dbReference>
<dbReference type="GO" id="GO:0046718">
    <property type="term" value="P:symbiont entry into host cell"/>
    <property type="evidence" value="ECO:0007669"/>
    <property type="project" value="UniProtKB-KW"/>
</dbReference>
<dbReference type="GO" id="GO:0075732">
    <property type="term" value="P:viral penetration into host nucleus"/>
    <property type="evidence" value="ECO:0007669"/>
    <property type="project" value="UniProtKB-KW"/>
</dbReference>
<dbReference type="Gene3D" id="2.60.120.20">
    <property type="match status" value="1"/>
</dbReference>
<dbReference type="InterPro" id="IPR000143">
    <property type="entry name" value="Gemcoat_MSV"/>
</dbReference>
<dbReference type="InterPro" id="IPR000263">
    <property type="entry name" value="GV_A/BR1_coat"/>
</dbReference>
<dbReference type="InterPro" id="IPR029053">
    <property type="entry name" value="Viral_coat"/>
</dbReference>
<dbReference type="Pfam" id="PF00844">
    <property type="entry name" value="Gemini_coat"/>
    <property type="match status" value="1"/>
</dbReference>
<dbReference type="PRINTS" id="PR00223">
    <property type="entry name" value="GEMCOATARBR1"/>
</dbReference>
<dbReference type="PRINTS" id="PR00226">
    <property type="entry name" value="GEMCOATMSV"/>
</dbReference>
<protein>
    <recommendedName>
        <fullName>Capsid protein</fullName>
    </recommendedName>
    <alternativeName>
        <fullName>Coat protein</fullName>
        <shortName>CP</shortName>
    </alternativeName>
</protein>
<organism>
    <name type="scientific">Maize streak virus genotype A (isolate South Africa)</name>
    <name type="common">MSV</name>
    <dbReference type="NCBI Taxonomy" id="10824"/>
    <lineage>
        <taxon>Viruses</taxon>
        <taxon>Monodnaviria</taxon>
        <taxon>Shotokuvirae</taxon>
        <taxon>Cressdnaviricota</taxon>
        <taxon>Repensiviricetes</taxon>
        <taxon>Geplafuvirales</taxon>
        <taxon>Geminiviridae</taxon>
        <taxon>Mastrevirus</taxon>
        <taxon>Maize streak virus</taxon>
    </lineage>
</organism>
<gene>
    <name type="ORF">V1</name>
</gene>
<feature type="chain" id="PRO_0000222187" description="Capsid protein">
    <location>
        <begin position="1"/>
        <end position="244"/>
    </location>
</feature>
<feature type="region of interest" description="Disordered" evidence="2">
    <location>
        <begin position="1"/>
        <end position="39"/>
    </location>
</feature>
<feature type="short sequence motif" description="Bipartite nuclear localization signal" evidence="1">
    <location>
        <begin position="1"/>
        <end position="24"/>
    </location>
</feature>
<sequence length="244" mass="26965">MSTSKRKRGDDANWSKRVPKKKPSSAGLKRAGSKADRPSLQIQTLQHAGTTMITVPSGGVCDLINTYARGSDEGNRHTSETLTYKIAVDYHFVADAAACRYSNTGTGVMWLVYDTTPGGQAPTPQTIFAYPDTLKAWPATWKVSRELCHRFVVKRRWLFNMETDGRIGSDIPPSNTSWKPCKRNIYFHKFTSGLGVRTQWKNVTDGGVGAIQRGALYMVIAPGNGLTFTAHGQTRLYFKSVGNQ</sequence>
<keyword id="KW-0167">Capsid protein</keyword>
<keyword id="KW-0238">DNA-binding</keyword>
<keyword id="KW-1048">Host nucleus</keyword>
<keyword id="KW-1185">Reference proteome</keyword>
<keyword id="KW-1140">T=1 icosahedral capsid protein</keyword>
<keyword id="KW-1163">Viral penetration into host nucleus</keyword>
<keyword id="KW-0946">Virion</keyword>
<keyword id="KW-1160">Virus entry into host cell</keyword>
<name>CAPSD_MSVS</name>
<proteinExistence type="inferred from homology"/>